<comment type="function">
    <text evidence="1 9">Involved in the breakdown of propeptides of storage proteins in protein-storage vacuoles (By similarity). Possesses aspartic protease activity in vitro.</text>
</comment>
<comment type="biophysicochemical properties">
    <phDependence>
        <text evidence="9">Optimum pH is 5.0-6.0 with insulin B chain as substrate and at 37 degrees Celsius.</text>
    </phDependence>
</comment>
<comment type="subcellular location">
    <subcellularLocation>
        <location evidence="8">Vacuole</location>
    </subcellularLocation>
    <text>Located in protein storage vacuoles (PSV) of the embryo.</text>
</comment>
<comment type="tissue specificity">
    <text evidence="6">Expressed in roots, leaves, stems, petals, carpels, seed pods and dry seeds.</text>
</comment>
<comment type="induction">
    <text evidence="6 7">By light and during senescence.</text>
</comment>
<comment type="similarity">
    <text evidence="10">Belongs to the peptidase A1 family.</text>
</comment>
<organism>
    <name type="scientific">Arabidopsis thaliana</name>
    <name type="common">Mouse-ear cress</name>
    <dbReference type="NCBI Taxonomy" id="3702"/>
    <lineage>
        <taxon>Eukaryota</taxon>
        <taxon>Viridiplantae</taxon>
        <taxon>Streptophyta</taxon>
        <taxon>Embryophyta</taxon>
        <taxon>Tracheophyta</taxon>
        <taxon>Spermatophyta</taxon>
        <taxon>Magnoliopsida</taxon>
        <taxon>eudicotyledons</taxon>
        <taxon>Gunneridae</taxon>
        <taxon>Pentapetalae</taxon>
        <taxon>rosids</taxon>
        <taxon>malvids</taxon>
        <taxon>Brassicales</taxon>
        <taxon>Brassicaceae</taxon>
        <taxon>Camelineae</taxon>
        <taxon>Arabidopsis</taxon>
    </lineage>
</organism>
<feature type="signal peptide" evidence="2">
    <location>
        <begin position="1"/>
        <end position="24"/>
    </location>
</feature>
<feature type="propeptide" id="PRO_0000420625" description="Activation peptide" evidence="2">
    <location>
        <begin position="25"/>
        <end position="64"/>
    </location>
</feature>
<feature type="chain" id="PRO_0000420626" description="Aspartic proteinase A1">
    <location>
        <begin position="65"/>
        <end position="506"/>
    </location>
</feature>
<feature type="domain" description="Peptidase A1" evidence="4">
    <location>
        <begin position="82"/>
        <end position="503"/>
    </location>
</feature>
<feature type="domain" description="Saposin B-type" evidence="3">
    <location>
        <begin position="312"/>
        <end position="417"/>
    </location>
</feature>
<feature type="active site" evidence="5">
    <location>
        <position position="100"/>
    </location>
</feature>
<feature type="active site" evidence="5">
    <location>
        <position position="287"/>
    </location>
</feature>
<feature type="glycosylation site" description="N-linked (GlcNAc...) asparagine" evidence="3">
    <location>
        <position position="397"/>
    </location>
</feature>
<feature type="disulfide bond" evidence="3">
    <location>
        <begin position="113"/>
        <end position="119"/>
    </location>
</feature>
<feature type="disulfide bond" evidence="3">
    <location>
        <begin position="278"/>
        <end position="282"/>
    </location>
</feature>
<feature type="disulfide bond" evidence="3">
    <location>
        <begin position="317"/>
        <end position="411"/>
    </location>
</feature>
<feature type="disulfide bond" evidence="3">
    <location>
        <begin position="342"/>
        <end position="383"/>
    </location>
</feature>
<feature type="disulfide bond" evidence="3">
    <location>
        <begin position="348"/>
        <end position="380"/>
    </location>
</feature>
<feature type="disulfide bond" evidence="3">
    <location>
        <begin position="425"/>
        <end position="462"/>
    </location>
</feature>
<protein>
    <recommendedName>
        <fullName>Aspartic proteinase A1</fullName>
        <ecNumber>3.4.23.-</ecNumber>
    </recommendedName>
</protein>
<reference key="1">
    <citation type="journal article" date="2000" name="Nature">
        <title>Sequence and analysis of chromosome 1 of the plant Arabidopsis thaliana.</title>
        <authorList>
            <person name="Theologis A."/>
            <person name="Ecker J.R."/>
            <person name="Palm C.J."/>
            <person name="Federspiel N.A."/>
            <person name="Kaul S."/>
            <person name="White O."/>
            <person name="Alonso J."/>
            <person name="Altafi H."/>
            <person name="Araujo R."/>
            <person name="Bowman C.L."/>
            <person name="Brooks S.Y."/>
            <person name="Buehler E."/>
            <person name="Chan A."/>
            <person name="Chao Q."/>
            <person name="Chen H."/>
            <person name="Cheuk R.F."/>
            <person name="Chin C.W."/>
            <person name="Chung M.K."/>
            <person name="Conn L."/>
            <person name="Conway A.B."/>
            <person name="Conway A.R."/>
            <person name="Creasy T.H."/>
            <person name="Dewar K."/>
            <person name="Dunn P."/>
            <person name="Etgu P."/>
            <person name="Feldblyum T.V."/>
            <person name="Feng J.-D."/>
            <person name="Fong B."/>
            <person name="Fujii C.Y."/>
            <person name="Gill J.E."/>
            <person name="Goldsmith A.D."/>
            <person name="Haas B."/>
            <person name="Hansen N.F."/>
            <person name="Hughes B."/>
            <person name="Huizar L."/>
            <person name="Hunter J.L."/>
            <person name="Jenkins J."/>
            <person name="Johnson-Hopson C."/>
            <person name="Khan S."/>
            <person name="Khaykin E."/>
            <person name="Kim C.J."/>
            <person name="Koo H.L."/>
            <person name="Kremenetskaia I."/>
            <person name="Kurtz D.B."/>
            <person name="Kwan A."/>
            <person name="Lam B."/>
            <person name="Langin-Hooper S."/>
            <person name="Lee A."/>
            <person name="Lee J.M."/>
            <person name="Lenz C.A."/>
            <person name="Li J.H."/>
            <person name="Li Y.-P."/>
            <person name="Lin X."/>
            <person name="Liu S.X."/>
            <person name="Liu Z.A."/>
            <person name="Luros J.S."/>
            <person name="Maiti R."/>
            <person name="Marziali A."/>
            <person name="Militscher J."/>
            <person name="Miranda M."/>
            <person name="Nguyen M."/>
            <person name="Nierman W.C."/>
            <person name="Osborne B.I."/>
            <person name="Pai G."/>
            <person name="Peterson J."/>
            <person name="Pham P.K."/>
            <person name="Rizzo M."/>
            <person name="Rooney T."/>
            <person name="Rowley D."/>
            <person name="Sakano H."/>
            <person name="Salzberg S.L."/>
            <person name="Schwartz J.R."/>
            <person name="Shinn P."/>
            <person name="Southwick A.M."/>
            <person name="Sun H."/>
            <person name="Tallon L.J."/>
            <person name="Tambunga G."/>
            <person name="Toriumi M.J."/>
            <person name="Town C.D."/>
            <person name="Utterback T."/>
            <person name="Van Aken S."/>
            <person name="Vaysberg M."/>
            <person name="Vysotskaia V.S."/>
            <person name="Walker M."/>
            <person name="Wu D."/>
            <person name="Yu G."/>
            <person name="Fraser C.M."/>
            <person name="Venter J.C."/>
            <person name="Davis R.W."/>
        </authorList>
    </citation>
    <scope>NUCLEOTIDE SEQUENCE [LARGE SCALE GENOMIC DNA]</scope>
    <source>
        <strain>cv. Columbia</strain>
    </source>
</reference>
<reference key="2">
    <citation type="journal article" date="2017" name="Plant J.">
        <title>Araport11: a complete reannotation of the Arabidopsis thaliana reference genome.</title>
        <authorList>
            <person name="Cheng C.Y."/>
            <person name="Krishnakumar V."/>
            <person name="Chan A.P."/>
            <person name="Thibaud-Nissen F."/>
            <person name="Schobel S."/>
            <person name="Town C.D."/>
        </authorList>
    </citation>
    <scope>GENOME REANNOTATION</scope>
    <source>
        <strain>cv. Columbia</strain>
    </source>
</reference>
<reference key="3">
    <citation type="journal article" date="2003" name="Science">
        <title>Empirical analysis of transcriptional activity in the Arabidopsis genome.</title>
        <authorList>
            <person name="Yamada K."/>
            <person name="Lim J."/>
            <person name="Dale J.M."/>
            <person name="Chen H."/>
            <person name="Shinn P."/>
            <person name="Palm C.J."/>
            <person name="Southwick A.M."/>
            <person name="Wu H.C."/>
            <person name="Kim C.J."/>
            <person name="Nguyen M."/>
            <person name="Pham P.K."/>
            <person name="Cheuk R.F."/>
            <person name="Karlin-Newmann G."/>
            <person name="Liu S.X."/>
            <person name="Lam B."/>
            <person name="Sakano H."/>
            <person name="Wu T."/>
            <person name="Yu G."/>
            <person name="Miranda M."/>
            <person name="Quach H.L."/>
            <person name="Tripp M."/>
            <person name="Chang C.H."/>
            <person name="Lee J.M."/>
            <person name="Toriumi M.J."/>
            <person name="Chan M.M."/>
            <person name="Tang C.C."/>
            <person name="Onodera C.S."/>
            <person name="Deng J.M."/>
            <person name="Akiyama K."/>
            <person name="Ansari Y."/>
            <person name="Arakawa T."/>
            <person name="Banh J."/>
            <person name="Banno F."/>
            <person name="Bowser L."/>
            <person name="Brooks S.Y."/>
            <person name="Carninci P."/>
            <person name="Chao Q."/>
            <person name="Choy N."/>
            <person name="Enju A."/>
            <person name="Goldsmith A.D."/>
            <person name="Gurjal M."/>
            <person name="Hansen N.F."/>
            <person name="Hayashizaki Y."/>
            <person name="Johnson-Hopson C."/>
            <person name="Hsuan V.W."/>
            <person name="Iida K."/>
            <person name="Karnes M."/>
            <person name="Khan S."/>
            <person name="Koesema E."/>
            <person name="Ishida J."/>
            <person name="Jiang P.X."/>
            <person name="Jones T."/>
            <person name="Kawai J."/>
            <person name="Kamiya A."/>
            <person name="Meyers C."/>
            <person name="Nakajima M."/>
            <person name="Narusaka M."/>
            <person name="Seki M."/>
            <person name="Sakurai T."/>
            <person name="Satou M."/>
            <person name="Tamse R."/>
            <person name="Vaysberg M."/>
            <person name="Wallender E.K."/>
            <person name="Wong C."/>
            <person name="Yamamura Y."/>
            <person name="Yuan S."/>
            <person name="Shinozaki K."/>
            <person name="Davis R.W."/>
            <person name="Theologis A."/>
            <person name="Ecker J.R."/>
        </authorList>
    </citation>
    <scope>NUCLEOTIDE SEQUENCE [LARGE SCALE MRNA]</scope>
    <source>
        <strain>cv. Columbia</strain>
    </source>
</reference>
<reference key="4">
    <citation type="submission" date="2002-03" db="EMBL/GenBank/DDBJ databases">
        <title>Full-length cDNA from Arabidopsis thaliana.</title>
        <authorList>
            <person name="Brover V.V."/>
            <person name="Troukhan M.E."/>
            <person name="Alexandrov N.A."/>
            <person name="Lu Y.-P."/>
            <person name="Flavell R.B."/>
            <person name="Feldmann K.A."/>
        </authorList>
    </citation>
    <scope>NUCLEOTIDE SEQUENCE [LARGE SCALE MRNA]</scope>
</reference>
<reference key="5">
    <citation type="journal article" date="1997" name="Plant Mol. Biol.">
        <title>Aspartic proteinase genes in the Brassicaceae Arabidopsis thaliana and Brassica napus.</title>
        <authorList>
            <person name="D'Hondt K."/>
            <person name="Stack S."/>
            <person name="Gutteridge S."/>
            <person name="Vandekerckhove J."/>
            <person name="Krebbers E."/>
            <person name="Gal S."/>
        </authorList>
    </citation>
    <scope>NUCLEOTIDE SEQUENCE [MRNA] OF 23-506</scope>
    <source>
        <strain>cv. Columbia</strain>
    </source>
</reference>
<reference key="6">
    <citation type="journal article" date="2002" name="Eur. J. Biochem.">
        <title>The three typical aspartic proteinase genes of Arabidopsis thaliana are differentially expressed.</title>
        <authorList>
            <person name="Chen X."/>
            <person name="Pfeil J.E."/>
            <person name="Gal S."/>
        </authorList>
    </citation>
    <scope>TISSUE SPECIFICITY</scope>
    <scope>INDUCTION BY LIGHT</scope>
</reference>
<reference key="7">
    <citation type="journal article" date="2003" name="J. Exp. Bot.">
        <title>Expression of senescence-enhanced genes in response to oxidative stress.</title>
        <authorList>
            <person name="Navabpour S."/>
            <person name="Morris K."/>
            <person name="Allen R."/>
            <person name="Harrison E."/>
            <person name="A-H-Mackerness S."/>
            <person name="Buchanan-Wollaston V."/>
        </authorList>
    </citation>
    <scope>INDUCTION BY SENESCENCE</scope>
</reference>
<reference key="8">
    <citation type="journal article" date="2006" name="Plant Cell">
        <title>The proteolytic processing of seed storage proteins in Arabidopsis embryo cells starts in the multivesicular bodies.</title>
        <authorList>
            <person name="Otegui M.S."/>
            <person name="Herder R."/>
            <person name="Schulze J."/>
            <person name="Jung R."/>
            <person name="Staehelin L.A."/>
        </authorList>
    </citation>
    <scope>SUBCELLULAR LOCATION</scope>
</reference>
<reference key="9">
    <citation type="journal article" date="2010" name="Phytochemistry">
        <title>Structure-function characterization of the recombinant aspartic proteinase A1 from Arabidopsis thaliana.</title>
        <authorList>
            <person name="Mazorra-Manzano M.A."/>
            <person name="Tanaka T."/>
            <person name="Dee D.R."/>
            <person name="Yada R.Y."/>
        </authorList>
    </citation>
    <scope>FUNCTION</scope>
    <scope>BIOPHYSICOCHEMICAL PROPERTIES</scope>
</reference>
<name>APA1_ARATH</name>
<evidence type="ECO:0000250" key="1"/>
<evidence type="ECO:0000255" key="2"/>
<evidence type="ECO:0000255" key="3">
    <source>
        <dbReference type="PROSITE-ProRule" id="PRU00415"/>
    </source>
</evidence>
<evidence type="ECO:0000255" key="4">
    <source>
        <dbReference type="PROSITE-ProRule" id="PRU01103"/>
    </source>
</evidence>
<evidence type="ECO:0000255" key="5">
    <source>
        <dbReference type="PROSITE-ProRule" id="PRU10094"/>
    </source>
</evidence>
<evidence type="ECO:0000269" key="6">
    <source>
    </source>
</evidence>
<evidence type="ECO:0000269" key="7">
    <source>
    </source>
</evidence>
<evidence type="ECO:0000269" key="8">
    <source>
    </source>
</evidence>
<evidence type="ECO:0000269" key="9">
    <source>
    </source>
</evidence>
<evidence type="ECO:0000305" key="10"/>
<accession>O65390</accession>
<accession>Q38934</accession>
<sequence length="506" mass="54614">MKIYSRTVAVSLIVSFLLCFSAFAERNDGTFRVGLKKLKLDSKNRLAARVESKQEKPLRAYRLGDSGDADVVVLKNYLDAQYYGEIAIGTPPQKFTVVFDTGSSNLWVPSSKCYFSLACLLHPKYKSSRSSTYEKNGKAAAIHYGTGAIAGFFSNDAVTVGDLVVKDQEFIEATKEPGITFVVAKFDGILGLGFQEISVGKAAPVWYNMLKQGLIKEPVFSFWLNRNADEEEGGELVFGGVDPNHFKGKHTYVPVTQKGYWQFDMGDVLIGGAPTGFCESGCSAIADSGTSLLAGPTTIITMINHAIGAAGVVSQQCKTVVDQYGQTILDLLLSETQPKKICSQIGLCTFDGTRGVSMGIESVVDKENAKLSNGVGDAACSACEMAVVWIQSQLRQNMTQERILNYVNELCERLPSPMGESAVDCAQLSTMPTVSLTIGGKVFDLAPEEYVLKVGEGPVAQCISGFIALDVAPPRGPLWILGDVFMGKYHTVFDFGNEQVGFAEAA</sequence>
<gene>
    <name type="primary">APA1</name>
    <name type="synonym">PRA1</name>
    <name type="ordered locus">At1g11910</name>
    <name type="ORF">F12F1.24</name>
</gene>
<keyword id="KW-0064">Aspartyl protease</keyword>
<keyword id="KW-1015">Disulfide bond</keyword>
<keyword id="KW-0325">Glycoprotein</keyword>
<keyword id="KW-0378">Hydrolase</keyword>
<keyword id="KW-0645">Protease</keyword>
<keyword id="KW-1185">Reference proteome</keyword>
<keyword id="KW-0677">Repeat</keyword>
<keyword id="KW-0732">Signal</keyword>
<keyword id="KW-0926">Vacuole</keyword>
<keyword id="KW-0865">Zymogen</keyword>
<proteinExistence type="evidence at protein level"/>
<dbReference type="EC" id="3.4.23.-"/>
<dbReference type="EMBL" id="AC002131">
    <property type="protein sequence ID" value="AAC17620.1"/>
    <property type="molecule type" value="Genomic_DNA"/>
</dbReference>
<dbReference type="EMBL" id="CP002684">
    <property type="protein sequence ID" value="AEE28813.1"/>
    <property type="molecule type" value="Genomic_DNA"/>
</dbReference>
<dbReference type="EMBL" id="AY056387">
    <property type="protein sequence ID" value="AAL08243.1"/>
    <property type="molecule type" value="mRNA"/>
</dbReference>
<dbReference type="EMBL" id="AY056403">
    <property type="protein sequence ID" value="AAL08259.1"/>
    <property type="molecule type" value="mRNA"/>
</dbReference>
<dbReference type="EMBL" id="AY063974">
    <property type="protein sequence ID" value="AAL36330.1"/>
    <property type="molecule type" value="mRNA"/>
</dbReference>
<dbReference type="EMBL" id="BT001980">
    <property type="protein sequence ID" value="AAN71979.1"/>
    <property type="molecule type" value="mRNA"/>
</dbReference>
<dbReference type="EMBL" id="AY088657">
    <property type="protein sequence ID" value="AAM66979.1"/>
    <property type="molecule type" value="mRNA"/>
</dbReference>
<dbReference type="EMBL" id="U51036">
    <property type="protein sequence ID" value="AAC49730.1"/>
    <property type="molecule type" value="mRNA"/>
</dbReference>
<dbReference type="PIR" id="F86253">
    <property type="entry name" value="F86253"/>
</dbReference>
<dbReference type="RefSeq" id="NP_172655.1">
    <property type="nucleotide sequence ID" value="NM_101062.4"/>
</dbReference>
<dbReference type="SMR" id="O65390"/>
<dbReference type="BioGRID" id="22980">
    <property type="interactions" value="12"/>
</dbReference>
<dbReference type="FunCoup" id="O65390">
    <property type="interactions" value="2588"/>
</dbReference>
<dbReference type="IntAct" id="O65390">
    <property type="interactions" value="11"/>
</dbReference>
<dbReference type="STRING" id="3702.O65390"/>
<dbReference type="MEROPS" id="A01.A02"/>
<dbReference type="GlyCosmos" id="O65390">
    <property type="glycosylation" value="1 site, No reported glycans"/>
</dbReference>
<dbReference type="GlyGen" id="O65390">
    <property type="glycosylation" value="1 site"/>
</dbReference>
<dbReference type="PaxDb" id="3702-AT1G11910.1"/>
<dbReference type="ProteomicsDB" id="246949"/>
<dbReference type="EnsemblPlants" id="AT1G11910.1">
    <property type="protein sequence ID" value="AT1G11910.1"/>
    <property type="gene ID" value="AT1G11910"/>
</dbReference>
<dbReference type="GeneID" id="837740"/>
<dbReference type="Gramene" id="AT1G11910.1">
    <property type="protein sequence ID" value="AT1G11910.1"/>
    <property type="gene ID" value="AT1G11910"/>
</dbReference>
<dbReference type="KEGG" id="ath:AT1G11910"/>
<dbReference type="Araport" id="AT1G11910"/>
<dbReference type="TAIR" id="AT1G11910">
    <property type="gene designation" value="APA1"/>
</dbReference>
<dbReference type="eggNOG" id="KOG1339">
    <property type="taxonomic scope" value="Eukaryota"/>
</dbReference>
<dbReference type="HOGENOM" id="CLU_013253_3_1_1"/>
<dbReference type="InParanoid" id="O65390"/>
<dbReference type="PhylomeDB" id="O65390"/>
<dbReference type="PRO" id="PR:O65390"/>
<dbReference type="Proteomes" id="UP000006548">
    <property type="component" value="Chromosome 1"/>
</dbReference>
<dbReference type="ExpressionAtlas" id="O65390">
    <property type="expression patterns" value="baseline and differential"/>
</dbReference>
<dbReference type="GO" id="GO:0005576">
    <property type="term" value="C:extracellular region"/>
    <property type="evidence" value="ECO:0007005"/>
    <property type="project" value="TAIR"/>
</dbReference>
<dbReference type="GO" id="GO:0000325">
    <property type="term" value="C:plant-type vacuole"/>
    <property type="evidence" value="ECO:0007005"/>
    <property type="project" value="TAIR"/>
</dbReference>
<dbReference type="GO" id="GO:0009506">
    <property type="term" value="C:plasmodesma"/>
    <property type="evidence" value="ECO:0007005"/>
    <property type="project" value="TAIR"/>
</dbReference>
<dbReference type="GO" id="GO:0099503">
    <property type="term" value="C:secretory vesicle"/>
    <property type="evidence" value="ECO:0007005"/>
    <property type="project" value="TAIR"/>
</dbReference>
<dbReference type="GO" id="GO:0005773">
    <property type="term" value="C:vacuole"/>
    <property type="evidence" value="ECO:0007005"/>
    <property type="project" value="TAIR"/>
</dbReference>
<dbReference type="GO" id="GO:0004190">
    <property type="term" value="F:aspartic-type endopeptidase activity"/>
    <property type="evidence" value="ECO:0007669"/>
    <property type="project" value="UniProtKB-KW"/>
</dbReference>
<dbReference type="GO" id="GO:0004175">
    <property type="term" value="F:endopeptidase activity"/>
    <property type="evidence" value="ECO:0000314"/>
    <property type="project" value="TAIR"/>
</dbReference>
<dbReference type="GO" id="GO:0006629">
    <property type="term" value="P:lipid metabolic process"/>
    <property type="evidence" value="ECO:0007669"/>
    <property type="project" value="InterPro"/>
</dbReference>
<dbReference type="GO" id="GO:0006508">
    <property type="term" value="P:proteolysis"/>
    <property type="evidence" value="ECO:0000314"/>
    <property type="project" value="TAIR"/>
</dbReference>
<dbReference type="CDD" id="cd06098">
    <property type="entry name" value="phytepsin"/>
    <property type="match status" value="1"/>
</dbReference>
<dbReference type="FunFam" id="1.10.225.10:FF:000001">
    <property type="entry name" value="Aspartic proteinase A1"/>
    <property type="match status" value="1"/>
</dbReference>
<dbReference type="FunFam" id="2.40.70.10:FF:000115">
    <property type="entry name" value="Lysosomal aspartic protease"/>
    <property type="match status" value="1"/>
</dbReference>
<dbReference type="FunFam" id="2.40.70.10:FF:000002">
    <property type="entry name" value="Vacuolar aspartic proteinase"/>
    <property type="match status" value="1"/>
</dbReference>
<dbReference type="Gene3D" id="2.40.70.10">
    <property type="entry name" value="Acid Proteases"/>
    <property type="match status" value="2"/>
</dbReference>
<dbReference type="Gene3D" id="1.10.225.10">
    <property type="entry name" value="Saposin-like"/>
    <property type="match status" value="1"/>
</dbReference>
<dbReference type="InterPro" id="IPR001461">
    <property type="entry name" value="Aspartic_peptidase_A1"/>
</dbReference>
<dbReference type="InterPro" id="IPR001969">
    <property type="entry name" value="Aspartic_peptidase_AS"/>
</dbReference>
<dbReference type="InterPro" id="IPR033121">
    <property type="entry name" value="PEPTIDASE_A1"/>
</dbReference>
<dbReference type="InterPro" id="IPR021109">
    <property type="entry name" value="Peptidase_aspartic_dom_sf"/>
</dbReference>
<dbReference type="InterPro" id="IPR033869">
    <property type="entry name" value="Phytepsin"/>
</dbReference>
<dbReference type="InterPro" id="IPR007856">
    <property type="entry name" value="SapB_1"/>
</dbReference>
<dbReference type="InterPro" id="IPR008138">
    <property type="entry name" value="SapB_2"/>
</dbReference>
<dbReference type="InterPro" id="IPR011001">
    <property type="entry name" value="Saposin-like"/>
</dbReference>
<dbReference type="InterPro" id="IPR008139">
    <property type="entry name" value="SaposinB_dom"/>
</dbReference>
<dbReference type="PANTHER" id="PTHR47966:SF76">
    <property type="entry name" value="ASPARTIC PROTEINASE A1"/>
    <property type="match status" value="1"/>
</dbReference>
<dbReference type="PANTHER" id="PTHR47966">
    <property type="entry name" value="BETA-SITE APP-CLEAVING ENZYME, ISOFORM A-RELATED"/>
    <property type="match status" value="1"/>
</dbReference>
<dbReference type="Pfam" id="PF00026">
    <property type="entry name" value="Asp"/>
    <property type="match status" value="1"/>
</dbReference>
<dbReference type="Pfam" id="PF05184">
    <property type="entry name" value="SapB_1"/>
    <property type="match status" value="1"/>
</dbReference>
<dbReference type="Pfam" id="PF03489">
    <property type="entry name" value="SapB_2"/>
    <property type="match status" value="1"/>
</dbReference>
<dbReference type="PRINTS" id="PR00792">
    <property type="entry name" value="PEPSIN"/>
</dbReference>
<dbReference type="SMART" id="SM00741">
    <property type="entry name" value="SapB"/>
    <property type="match status" value="1"/>
</dbReference>
<dbReference type="SUPFAM" id="SSF50630">
    <property type="entry name" value="Acid proteases"/>
    <property type="match status" value="1"/>
</dbReference>
<dbReference type="SUPFAM" id="SSF47862">
    <property type="entry name" value="Saposin"/>
    <property type="match status" value="1"/>
</dbReference>
<dbReference type="PROSITE" id="PS00141">
    <property type="entry name" value="ASP_PROTEASE"/>
    <property type="match status" value="2"/>
</dbReference>
<dbReference type="PROSITE" id="PS51767">
    <property type="entry name" value="PEPTIDASE_A1"/>
    <property type="match status" value="1"/>
</dbReference>
<dbReference type="PROSITE" id="PS50015">
    <property type="entry name" value="SAP_B"/>
    <property type="match status" value="2"/>
</dbReference>